<evidence type="ECO:0000255" key="1"/>
<evidence type="ECO:0000256" key="2">
    <source>
        <dbReference type="SAM" id="MobiDB-lite"/>
    </source>
</evidence>
<evidence type="ECO:0000269" key="3">
    <source>
    </source>
</evidence>
<evidence type="ECO:0000269" key="4">
    <source>
    </source>
</evidence>
<evidence type="ECO:0000269" key="5">
    <source>
    </source>
</evidence>
<evidence type="ECO:0000305" key="6"/>
<name>FGF3_HUMAN</name>
<sequence length="239" mass="26887">MGLIWLLLLSLLEPGWPAAGPGARLRRDAGGRGGVYEHLGGAPRRRKLYCATKYHLQLHPSGRVNGSLENSAYSILEITAVEVGIVAIRGLFSGRYLAMNKRGRLYASEHYSAECEFVERIHELGYNTYASRLYRTVSSTPGARRQPSAERLWYVSVNGKGRPRRGFKTRRTQKSSLFLPRVLDHRDHEMVRQLQSGLPRPPGKGVQPRRRRQKQSPDNLEPSHVQASRLGSQLEASAH</sequence>
<protein>
    <recommendedName>
        <fullName>Fibroblast growth factor 3</fullName>
        <shortName>FGF-3</shortName>
    </recommendedName>
    <alternativeName>
        <fullName>Heparin-binding growth factor 3</fullName>
        <shortName>HBGF-3</shortName>
    </alternativeName>
    <alternativeName>
        <fullName>Proto-oncogene Int-2</fullName>
    </alternativeName>
</protein>
<organism>
    <name type="scientific">Homo sapiens</name>
    <name type="common">Human</name>
    <dbReference type="NCBI Taxonomy" id="9606"/>
    <lineage>
        <taxon>Eukaryota</taxon>
        <taxon>Metazoa</taxon>
        <taxon>Chordata</taxon>
        <taxon>Craniata</taxon>
        <taxon>Vertebrata</taxon>
        <taxon>Euteleostomi</taxon>
        <taxon>Mammalia</taxon>
        <taxon>Eutheria</taxon>
        <taxon>Euarchontoglires</taxon>
        <taxon>Primates</taxon>
        <taxon>Haplorrhini</taxon>
        <taxon>Catarrhini</taxon>
        <taxon>Hominidae</taxon>
        <taxon>Homo</taxon>
    </lineage>
</organism>
<keyword id="KW-0217">Developmental protein</keyword>
<keyword id="KW-0221">Differentiation</keyword>
<keyword id="KW-0225">Disease variant</keyword>
<keyword id="KW-0325">Glycoprotein</keyword>
<keyword id="KW-0339">Growth factor</keyword>
<keyword id="KW-0497">Mitogen</keyword>
<keyword id="KW-1267">Proteomics identification</keyword>
<keyword id="KW-0656">Proto-oncogene</keyword>
<keyword id="KW-1185">Reference proteome</keyword>
<keyword id="KW-0964">Secreted</keyword>
<keyword id="KW-0732">Signal</keyword>
<accession>P11487</accession>
<accession>Q0VG69</accession>
<proteinExistence type="evidence at protein level"/>
<reference key="1">
    <citation type="journal article" date="1989" name="Oncogene">
        <title>Sequence organization of the human int-2 gene and its expression in teratocarcinoma cells.</title>
        <authorList>
            <person name="Brooks S."/>
            <person name="Smith R."/>
            <person name="Casey G."/>
            <person name="Dickson C."/>
            <person name="Peters G."/>
        </authorList>
    </citation>
    <scope>NUCLEOTIDE SEQUENCE [GENOMIC DNA]</scope>
    <source>
        <tissue>Placenta</tissue>
    </source>
</reference>
<reference key="2">
    <citation type="journal article" date="2004" name="Genome Res.">
        <title>The status, quality, and expansion of the NIH full-length cDNA project: the Mammalian Gene Collection (MGC).</title>
        <authorList>
            <consortium name="The MGC Project Team"/>
        </authorList>
    </citation>
    <scope>NUCLEOTIDE SEQUENCE [LARGE SCALE MRNA]</scope>
</reference>
<reference key="3">
    <citation type="journal article" date="1996" name="J. Biol. Chem.">
        <title>Receptor specificity of the fibroblast growth factor family.</title>
        <authorList>
            <person name="Ornitz D.M."/>
            <person name="Xu J."/>
            <person name="Colvin J.S."/>
            <person name="McEwen D.G."/>
            <person name="MacArthur C.A."/>
            <person name="Coulier F."/>
            <person name="Gao G."/>
            <person name="Goldfarb M."/>
        </authorList>
    </citation>
    <scope>INTERACTION WITH FGFR1 AND FGFR2</scope>
    <scope>FUNCTION IN CELL PROLIFERATION</scope>
</reference>
<reference key="4">
    <citation type="journal article" date="2010" name="Nat. Rev. Cancer">
        <title>Fibroblast growth factor signalling: from development to cancer.</title>
        <authorList>
            <person name="Turner N."/>
            <person name="Grose R."/>
        </authorList>
    </citation>
    <scope>REVIEW</scope>
</reference>
<reference key="5">
    <citation type="journal article" date="2007" name="Am. J. Hum. Genet.">
        <title>Homozygous mutations in fibroblast growth factor 3 are associated with a new form of syndromic deafness characterized by inner ear agenesis, microtia, and microdontia.</title>
        <authorList>
            <person name="Tekin M."/>
            <person name="Hismi B.O."/>
            <person name="Fitoz S."/>
            <person name="Oezdag H."/>
            <person name="Cengiz F.B."/>
            <person name="Sirmaci A."/>
            <person name="Aslan I."/>
            <person name="Inceoglu B."/>
            <person name="Yueksel-Konuk E.B."/>
            <person name="Yilmaz S.T."/>
            <person name="Yasun O."/>
            <person name="Akar N."/>
        </authorList>
    </citation>
    <scope>VARIANT LAMM PRO-156</scope>
</reference>
<reference key="6">
    <citation type="journal article" date="2008" name="Clin. Genet.">
        <title>Homozygous FGF3 mutations result in congenital deafness with inner ear agenesis, microtia, and microdontia.</title>
        <authorList>
            <person name="Tekin M."/>
            <person name="Ozturkmen Akay H."/>
            <person name="Fitoz S."/>
            <person name="Birnbaum S."/>
            <person name="Cengiz F.B."/>
            <person name="Sennaroglu L."/>
            <person name="Incesulu A."/>
            <person name="Yuksel Konuk E.B."/>
            <person name="Hasanefendioglu Bayrak A."/>
            <person name="Senturk S."/>
            <person name="Cebeci I."/>
            <person name="Utine G.E."/>
            <person name="Tuncbilek E."/>
            <person name="Nance W.E."/>
            <person name="Duman D."/>
        </authorList>
    </citation>
    <scope>VARIANT LAMM PRO-6</scope>
</reference>
<feature type="signal peptide" evidence="1">
    <location>
        <begin position="1"/>
        <end position="17"/>
    </location>
</feature>
<feature type="chain" id="PRO_0000008946" description="Fibroblast growth factor 3">
    <location>
        <begin position="18"/>
        <end position="239"/>
    </location>
</feature>
<feature type="region of interest" description="Disordered" evidence="2">
    <location>
        <begin position="193"/>
        <end position="239"/>
    </location>
</feature>
<feature type="compositionally biased region" description="Polar residues" evidence="2">
    <location>
        <begin position="225"/>
        <end position="239"/>
    </location>
</feature>
<feature type="glycosylation site" description="N-linked (GlcNAc...) asparagine" evidence="1">
    <location>
        <position position="65"/>
    </location>
</feature>
<feature type="sequence variant" id="VAR_060492" description="In LAMM; probably impairs secretion; dbSNP:rs121917706." evidence="4">
    <original>L</original>
    <variation>P</variation>
    <location>
        <position position="6"/>
    </location>
</feature>
<feature type="sequence variant" id="VAR_031848" description="In LAMM; dbSNP:rs121917703." evidence="3">
    <original>S</original>
    <variation>P</variation>
    <location>
        <position position="156"/>
    </location>
</feature>
<gene>
    <name type="primary">FGF3</name>
    <name type="synonym">INT2</name>
</gene>
<dbReference type="EMBL" id="X14445">
    <property type="protein sequence ID" value="CAA32615.1"/>
    <property type="molecule type" value="Genomic_DNA"/>
</dbReference>
<dbReference type="EMBL" id="BC113739">
    <property type="protein sequence ID" value="AAI13740.1"/>
    <property type="molecule type" value="mRNA"/>
</dbReference>
<dbReference type="CCDS" id="CCDS8195.1"/>
<dbReference type="PIR" id="S04742">
    <property type="entry name" value="S04742"/>
</dbReference>
<dbReference type="RefSeq" id="NP_005238.1">
    <property type="nucleotide sequence ID" value="NM_005247.4"/>
</dbReference>
<dbReference type="SMR" id="P11487"/>
<dbReference type="BioGRID" id="108539">
    <property type="interactions" value="64"/>
</dbReference>
<dbReference type="DIP" id="DIP-4014N"/>
<dbReference type="FunCoup" id="P11487">
    <property type="interactions" value="919"/>
</dbReference>
<dbReference type="IntAct" id="P11487">
    <property type="interactions" value="56"/>
</dbReference>
<dbReference type="STRING" id="9606.ENSP00000334122"/>
<dbReference type="GlyCosmos" id="P11487">
    <property type="glycosylation" value="1 site, No reported glycans"/>
</dbReference>
<dbReference type="GlyGen" id="P11487">
    <property type="glycosylation" value="2 sites"/>
</dbReference>
<dbReference type="iPTMnet" id="P11487"/>
<dbReference type="PhosphoSitePlus" id="P11487"/>
<dbReference type="BioMuta" id="FGF3"/>
<dbReference type="DMDM" id="122748"/>
<dbReference type="MassIVE" id="P11487"/>
<dbReference type="PaxDb" id="9606-ENSP00000334122"/>
<dbReference type="PeptideAtlas" id="P11487"/>
<dbReference type="ProteomicsDB" id="52783"/>
<dbReference type="Antibodypedia" id="2164">
    <property type="antibodies" value="221 antibodies from 29 providers"/>
</dbReference>
<dbReference type="DNASU" id="2248"/>
<dbReference type="Ensembl" id="ENST00000334134.4">
    <property type="protein sequence ID" value="ENSP00000334122.2"/>
    <property type="gene ID" value="ENSG00000186895.4"/>
</dbReference>
<dbReference type="GeneID" id="2248"/>
<dbReference type="KEGG" id="hsa:2248"/>
<dbReference type="MANE-Select" id="ENST00000334134.4">
    <property type="protein sequence ID" value="ENSP00000334122.2"/>
    <property type="RefSeq nucleotide sequence ID" value="NM_005247.4"/>
    <property type="RefSeq protein sequence ID" value="NP_005238.1"/>
</dbReference>
<dbReference type="UCSC" id="uc001oph.4">
    <property type="organism name" value="human"/>
</dbReference>
<dbReference type="AGR" id="HGNC:3681"/>
<dbReference type="CTD" id="2248"/>
<dbReference type="DisGeNET" id="2248"/>
<dbReference type="GeneCards" id="FGF3"/>
<dbReference type="GeneReviews" id="FGF3"/>
<dbReference type="HGNC" id="HGNC:3681">
    <property type="gene designation" value="FGF3"/>
</dbReference>
<dbReference type="HPA" id="ENSG00000186895">
    <property type="expression patterns" value="Tissue enriched (brain)"/>
</dbReference>
<dbReference type="MalaCards" id="FGF3"/>
<dbReference type="MIM" id="164950">
    <property type="type" value="gene"/>
</dbReference>
<dbReference type="MIM" id="610706">
    <property type="type" value="phenotype"/>
</dbReference>
<dbReference type="neXtProt" id="NX_P11487"/>
<dbReference type="OpenTargets" id="ENSG00000186895"/>
<dbReference type="Orphanet" id="90024">
    <property type="disease" value="Deafness with labyrinthine aplasia, microtia, and microdontia"/>
</dbReference>
<dbReference type="Orphanet" id="99806">
    <property type="disease" value="Oculootodental syndrome"/>
</dbReference>
<dbReference type="Orphanet" id="2791">
    <property type="disease" value="Otodental syndrome"/>
</dbReference>
<dbReference type="PharmGKB" id="PA28120"/>
<dbReference type="VEuPathDB" id="HostDB:ENSG00000186895"/>
<dbReference type="eggNOG" id="KOG3885">
    <property type="taxonomic scope" value="Eukaryota"/>
</dbReference>
<dbReference type="GeneTree" id="ENSGT00940000161128"/>
<dbReference type="HOGENOM" id="CLU_081609_1_0_1"/>
<dbReference type="InParanoid" id="P11487"/>
<dbReference type="OMA" id="YHLQIHA"/>
<dbReference type="OrthoDB" id="6158176at2759"/>
<dbReference type="PAN-GO" id="P11487">
    <property type="GO annotations" value="11 GO annotations based on evolutionary models"/>
</dbReference>
<dbReference type="PhylomeDB" id="P11487"/>
<dbReference type="TreeFam" id="TF317805"/>
<dbReference type="PathwayCommons" id="P11487"/>
<dbReference type="Reactome" id="R-HSA-109704">
    <property type="pathway name" value="PI3K Cascade"/>
</dbReference>
<dbReference type="Reactome" id="R-HSA-1257604">
    <property type="pathway name" value="PIP3 activates AKT signaling"/>
</dbReference>
<dbReference type="Reactome" id="R-HSA-190370">
    <property type="pathway name" value="FGFR1b ligand binding and activation"/>
</dbReference>
<dbReference type="Reactome" id="R-HSA-190377">
    <property type="pathway name" value="FGFR2b ligand binding and activation"/>
</dbReference>
<dbReference type="Reactome" id="R-HSA-2033519">
    <property type="pathway name" value="Activated point mutants of FGFR2"/>
</dbReference>
<dbReference type="Reactome" id="R-HSA-2219530">
    <property type="pathway name" value="Constitutive Signaling by Aberrant PI3K in Cancer"/>
</dbReference>
<dbReference type="Reactome" id="R-HSA-5654219">
    <property type="pathway name" value="Phospholipase C-mediated cascade: FGFR1"/>
</dbReference>
<dbReference type="Reactome" id="R-HSA-5654221">
    <property type="pathway name" value="Phospholipase C-mediated cascade, FGFR2"/>
</dbReference>
<dbReference type="Reactome" id="R-HSA-5654687">
    <property type="pathway name" value="Downstream signaling of activated FGFR1"/>
</dbReference>
<dbReference type="Reactome" id="R-HSA-5654688">
    <property type="pathway name" value="SHC-mediated cascade:FGFR1"/>
</dbReference>
<dbReference type="Reactome" id="R-HSA-5654689">
    <property type="pathway name" value="PI-3K cascade:FGFR1"/>
</dbReference>
<dbReference type="Reactome" id="R-HSA-5654693">
    <property type="pathway name" value="FRS-mediated FGFR1 signaling"/>
</dbReference>
<dbReference type="Reactome" id="R-HSA-5654695">
    <property type="pathway name" value="PI-3K cascade:FGFR2"/>
</dbReference>
<dbReference type="Reactome" id="R-HSA-5654699">
    <property type="pathway name" value="SHC-mediated cascade:FGFR2"/>
</dbReference>
<dbReference type="Reactome" id="R-HSA-5654700">
    <property type="pathway name" value="FRS-mediated FGFR2 signaling"/>
</dbReference>
<dbReference type="Reactome" id="R-HSA-5654726">
    <property type="pathway name" value="Negative regulation of FGFR1 signaling"/>
</dbReference>
<dbReference type="Reactome" id="R-HSA-5654727">
    <property type="pathway name" value="Negative regulation of FGFR2 signaling"/>
</dbReference>
<dbReference type="Reactome" id="R-HSA-5655253">
    <property type="pathway name" value="Signaling by FGFR2 in disease"/>
</dbReference>
<dbReference type="Reactome" id="R-HSA-5658623">
    <property type="pathway name" value="FGFRL1 modulation of FGFR1 signaling"/>
</dbReference>
<dbReference type="Reactome" id="R-HSA-5673001">
    <property type="pathway name" value="RAF/MAP kinase cascade"/>
</dbReference>
<dbReference type="Reactome" id="R-HSA-6811558">
    <property type="pathway name" value="PI5P, PP2A and IER3 Regulate PI3K/AKT Signaling"/>
</dbReference>
<dbReference type="SignaLink" id="P11487"/>
<dbReference type="SIGNOR" id="P11487"/>
<dbReference type="BioGRID-ORCS" id="2248">
    <property type="hits" value="8 hits in 1146 CRISPR screens"/>
</dbReference>
<dbReference type="GeneWiki" id="FGF3"/>
<dbReference type="GenomeRNAi" id="2248"/>
<dbReference type="Pharos" id="P11487">
    <property type="development level" value="Tbio"/>
</dbReference>
<dbReference type="PRO" id="PR:P11487"/>
<dbReference type="Proteomes" id="UP000005640">
    <property type="component" value="Chromosome 11"/>
</dbReference>
<dbReference type="RNAct" id="P11487">
    <property type="molecule type" value="protein"/>
</dbReference>
<dbReference type="Bgee" id="ENSG00000186895">
    <property type="expression patterns" value="Expressed in cerebellar hemisphere and 18 other cell types or tissues"/>
</dbReference>
<dbReference type="GO" id="GO:0005737">
    <property type="term" value="C:cytoplasm"/>
    <property type="evidence" value="ECO:0000318"/>
    <property type="project" value="GO_Central"/>
</dbReference>
<dbReference type="GO" id="GO:0005576">
    <property type="term" value="C:extracellular region"/>
    <property type="evidence" value="ECO:0000304"/>
    <property type="project" value="Reactome"/>
</dbReference>
<dbReference type="GO" id="GO:0005615">
    <property type="term" value="C:extracellular space"/>
    <property type="evidence" value="ECO:0000318"/>
    <property type="project" value="GO_Central"/>
</dbReference>
<dbReference type="GO" id="GO:0005104">
    <property type="term" value="F:fibroblast growth factor receptor binding"/>
    <property type="evidence" value="ECO:0000318"/>
    <property type="project" value="GO_Central"/>
</dbReference>
<dbReference type="GO" id="GO:0008083">
    <property type="term" value="F:growth factor activity"/>
    <property type="evidence" value="ECO:0000318"/>
    <property type="project" value="GO_Central"/>
</dbReference>
<dbReference type="GO" id="GO:0009653">
    <property type="term" value="P:anatomical structure morphogenesis"/>
    <property type="evidence" value="ECO:0000304"/>
    <property type="project" value="ProtInc"/>
</dbReference>
<dbReference type="GO" id="GO:0007267">
    <property type="term" value="P:cell-cell signaling"/>
    <property type="evidence" value="ECO:0000304"/>
    <property type="project" value="ProtInc"/>
</dbReference>
<dbReference type="GO" id="GO:0008543">
    <property type="term" value="P:fibroblast growth factor receptor signaling pathway"/>
    <property type="evidence" value="ECO:0000316"/>
    <property type="project" value="MGI"/>
</dbReference>
<dbReference type="GO" id="GO:0055026">
    <property type="term" value="P:negative regulation of cardiac muscle tissue development"/>
    <property type="evidence" value="ECO:0000315"/>
    <property type="project" value="BHF-UCL"/>
</dbReference>
<dbReference type="GO" id="GO:0022008">
    <property type="term" value="P:neurogenesis"/>
    <property type="evidence" value="ECO:0000318"/>
    <property type="project" value="GO_Central"/>
</dbReference>
<dbReference type="GO" id="GO:0051781">
    <property type="term" value="P:positive regulation of cell division"/>
    <property type="evidence" value="ECO:0007669"/>
    <property type="project" value="UniProtKB-KW"/>
</dbReference>
<dbReference type="GO" id="GO:0008284">
    <property type="term" value="P:positive regulation of cell population proliferation"/>
    <property type="evidence" value="ECO:0000316"/>
    <property type="project" value="MGI"/>
</dbReference>
<dbReference type="GO" id="GO:0043410">
    <property type="term" value="P:positive regulation of MAPK cascade"/>
    <property type="evidence" value="ECO:0000318"/>
    <property type="project" value="GO_Central"/>
</dbReference>
<dbReference type="GO" id="GO:0030334">
    <property type="term" value="P:regulation of cell migration"/>
    <property type="evidence" value="ECO:0000318"/>
    <property type="project" value="GO_Central"/>
</dbReference>
<dbReference type="GO" id="GO:0007165">
    <property type="term" value="P:signal transduction"/>
    <property type="evidence" value="ECO:0000304"/>
    <property type="project" value="ProtInc"/>
</dbReference>
<dbReference type="CDD" id="cd23315">
    <property type="entry name" value="beta-trefoil_FGF3"/>
    <property type="match status" value="1"/>
</dbReference>
<dbReference type="FunFam" id="2.80.10.50:FF:000060">
    <property type="entry name" value="Fibroblast growth factor"/>
    <property type="match status" value="1"/>
</dbReference>
<dbReference type="Gene3D" id="2.80.10.50">
    <property type="match status" value="1"/>
</dbReference>
<dbReference type="InterPro" id="IPR002209">
    <property type="entry name" value="Fibroblast_GF_fam"/>
</dbReference>
<dbReference type="InterPro" id="IPR008996">
    <property type="entry name" value="IL1/FGF"/>
</dbReference>
<dbReference type="PANTHER" id="PTHR11486">
    <property type="entry name" value="FIBROBLAST GROWTH FACTOR"/>
    <property type="match status" value="1"/>
</dbReference>
<dbReference type="Pfam" id="PF00167">
    <property type="entry name" value="FGF"/>
    <property type="match status" value="1"/>
</dbReference>
<dbReference type="PRINTS" id="PR00263">
    <property type="entry name" value="HBGFFGF"/>
</dbReference>
<dbReference type="PRINTS" id="PR00262">
    <property type="entry name" value="IL1HBGF"/>
</dbReference>
<dbReference type="SMART" id="SM00442">
    <property type="entry name" value="FGF"/>
    <property type="match status" value="1"/>
</dbReference>
<dbReference type="SUPFAM" id="SSF50353">
    <property type="entry name" value="Cytokine"/>
    <property type="match status" value="1"/>
</dbReference>
<dbReference type="PROSITE" id="PS00247">
    <property type="entry name" value="HBGF_FGF"/>
    <property type="match status" value="1"/>
</dbReference>
<comment type="function">
    <text evidence="5">Plays an important role in the regulation of embryonic development, cell proliferation, and cell differentiation. Required for normal ear development.</text>
</comment>
<comment type="subunit">
    <text evidence="5">Interacts with FGFR1 and FGFR2. Affinity between fibroblast growth factors (FGFs) and their receptors is increased by heparan sulfate glycosaminoglycans that function as coreceptors.</text>
</comment>
<comment type="subcellular location">
    <subcellularLocation>
        <location evidence="6">Secreted</location>
    </subcellularLocation>
</comment>
<comment type="disease" evidence="3 4">
    <disease id="DI-01475">
        <name>Deafness with labyrinthine aplasia, microtia and microdontia</name>
        <acronym>LAMM</acronym>
        <description>Unique autosomal recessive syndrome characterized by type I microtia, microdontia, and profound congenital deafness associated with a complete absence of inner ear structures (Michel aplasia).</description>
        <dbReference type="MIM" id="610706"/>
    </disease>
    <text>The disease is caused by variants affecting the gene represented in this entry.</text>
</comment>
<comment type="similarity">
    <text evidence="6">Belongs to the heparin-binding growth factors family.</text>
</comment>